<sequence>MAEKLIPSCRGQWFLPARVLREGFLRARPVAVDGGFKLTIGPLTVATRVWDWVYVHYNENATDWLRGMNPPFWEEPCDVLDFLPGVACVNEATFLTLKKKYGSYLHLFVPLRHTRGNIFFGFSPLSATGMAVLKIKTFHGGTQAPDRPGVPMEVYAWETAHFLDAAPKLIEWEVSGTRENRKSAQMVTFSECGLYGSMEGYFYRERATVDICATILADLTGKLLALIRKGIYHGDLKSENIIMMSRSGPGKLIDFEHSHGPGETMTSFWYPDRTFFWNPIGTEAYAPPERSRGRGRNAGVPGIVFQIGLIALNIMVERMERVFVNHTWIKGDGYRAHVLKVIKARGTLDLRGGARTLARVDELIGLVARCLERDPAMRPSLETLVDEFSKI</sequence>
<accession>P15443</accession>
<name>KR14_ICHVA</name>
<proteinExistence type="inferred from homology"/>
<gene>
    <name type="primary">ORF14</name>
</gene>
<organism>
    <name type="scientific">Ictalurid herpesvirus 1 (strain Auburn)</name>
    <name type="common">IcHV-1</name>
    <name type="synonym">Channel catfish herpesvirus</name>
    <dbReference type="NCBI Taxonomy" id="766178"/>
    <lineage>
        <taxon>Viruses</taxon>
        <taxon>Duplodnaviria</taxon>
        <taxon>Heunggongvirae</taxon>
        <taxon>Peploviricota</taxon>
        <taxon>Herviviricetes</taxon>
        <taxon>Herpesvirales</taxon>
        <taxon>Alloherpesviridae</taxon>
        <taxon>Ictavirus</taxon>
        <taxon>Ictavirus ictaluridallo1</taxon>
        <taxon>Ictalurid herpesvirus 1</taxon>
    </lineage>
</organism>
<feature type="chain" id="PRO_0000086172" description="Protein kinase ORF14">
    <location>
        <begin position="1"/>
        <end position="391"/>
    </location>
</feature>
<feature type="domain" description="Protein kinase" evidence="1">
    <location>
        <begin position="109"/>
        <end position="391"/>
    </location>
</feature>
<feature type="active site" description="Proton acceptor" evidence="1 2">
    <location>
        <position position="235"/>
    </location>
</feature>
<feature type="binding site" evidence="1">
    <location>
        <position position="134"/>
    </location>
    <ligand>
        <name>ATP</name>
        <dbReference type="ChEBI" id="CHEBI:30616"/>
    </ligand>
</feature>
<feature type="sequence conflict" description="In Ref. 2." evidence="3" ref="2">
    <original>LSATGMAVLKIKTFHGGTQAPD</original>
    <variation>CPPREWPCSRSRPFTAAPRPPT</variation>
    <location>
        <begin position="125"/>
        <end position="146"/>
    </location>
</feature>
<feature type="sequence conflict" description="In Ref. 2; CAA34100." evidence="3" ref="2">
    <original>P</original>
    <variation>S</variation>
    <location>
        <position position="287"/>
    </location>
</feature>
<feature type="sequence conflict" description="In Ref. 2; CAA34100." evidence="3" ref="2">
    <original>GRGRNAGVPGIVFQIGLIALNIMVERMERVFVNHTW</original>
    <variation>DRVPDRPDSAQHHGGTHGAGIREPHL</variation>
    <location>
        <begin position="293"/>
        <end position="328"/>
    </location>
</feature>
<feature type="sequence conflict" description="In Ref. 2; CAA34100." evidence="3" ref="2">
    <original>LA</original>
    <variation>WP</variation>
    <location>
        <begin position="357"/>
        <end position="358"/>
    </location>
</feature>
<keyword id="KW-0067">ATP-binding</keyword>
<keyword id="KW-0418">Kinase</keyword>
<keyword id="KW-0547">Nucleotide-binding</keyword>
<keyword id="KW-1185">Reference proteome</keyword>
<keyword id="KW-0723">Serine/threonine-protein kinase</keyword>
<keyword id="KW-0808">Transferase</keyword>
<reference key="1">
    <citation type="journal article" date="1992" name="Virology">
        <title>Channel catfish virus: a new type of herpesvirus.</title>
        <authorList>
            <person name="Davison A.J."/>
        </authorList>
    </citation>
    <scope>NUCLEOTIDE SEQUENCE [LARGE SCALE GENOMIC DNA]</scope>
    <source>
        <strain>Auburn 1</strain>
    </source>
</reference>
<reference key="2">
    <citation type="journal article" date="1990" name="Nucleic Acids Res.">
        <title>A protein kinase-related gene within the channel catfish herpesvirus genome.</title>
        <authorList>
            <person name="Lacasa M."/>
        </authorList>
    </citation>
    <scope>NUCLEOTIDE SEQUENCE [GENOMIC DNA] OF 114-391</scope>
</reference>
<organismHost>
    <name type="scientific">Ictaluridae</name>
    <name type="common">bullhead catfishes</name>
    <dbReference type="NCBI Taxonomy" id="7996"/>
</organismHost>
<protein>
    <recommendedName>
        <fullName>Protein kinase ORF14</fullName>
        <ecNumber>2.7.11.1</ecNumber>
    </recommendedName>
</protein>
<evidence type="ECO:0000255" key="1">
    <source>
        <dbReference type="PROSITE-ProRule" id="PRU00159"/>
    </source>
</evidence>
<evidence type="ECO:0000255" key="2">
    <source>
        <dbReference type="PROSITE-ProRule" id="PRU10027"/>
    </source>
</evidence>
<evidence type="ECO:0000305" key="3"/>
<dbReference type="EC" id="2.7.11.1"/>
<dbReference type="EMBL" id="M75136">
    <property type="protein sequence ID" value="AAA88117.1"/>
    <property type="molecule type" value="Genomic_DNA"/>
</dbReference>
<dbReference type="EMBL" id="M75136">
    <property type="protein sequence ID" value="AAA88195.1"/>
    <property type="molecule type" value="Genomic_DNA"/>
</dbReference>
<dbReference type="EMBL" id="X15978">
    <property type="protein sequence ID" value="CAA34100.1"/>
    <property type="status" value="ALT_INIT"/>
    <property type="molecule type" value="Genomic_DNA"/>
</dbReference>
<dbReference type="PIR" id="F36787">
    <property type="entry name" value="TVBEI1"/>
</dbReference>
<dbReference type="PIR" id="S14686">
    <property type="entry name" value="S14686"/>
</dbReference>
<dbReference type="KEGG" id="vg:1488378"/>
<dbReference type="KEGG" id="vg:1488413"/>
<dbReference type="Proteomes" id="UP000007643">
    <property type="component" value="Segment"/>
</dbReference>
<dbReference type="GO" id="GO:0005524">
    <property type="term" value="F:ATP binding"/>
    <property type="evidence" value="ECO:0007669"/>
    <property type="project" value="UniProtKB-KW"/>
</dbReference>
<dbReference type="GO" id="GO:0106310">
    <property type="term" value="F:protein serine kinase activity"/>
    <property type="evidence" value="ECO:0007669"/>
    <property type="project" value="RHEA"/>
</dbReference>
<dbReference type="GO" id="GO:0004674">
    <property type="term" value="F:protein serine/threonine kinase activity"/>
    <property type="evidence" value="ECO:0007669"/>
    <property type="project" value="UniProtKB-KW"/>
</dbReference>
<dbReference type="Gene3D" id="1.10.510.10">
    <property type="entry name" value="Transferase(Phosphotransferase) domain 1"/>
    <property type="match status" value="1"/>
</dbReference>
<dbReference type="InterPro" id="IPR011009">
    <property type="entry name" value="Kinase-like_dom_sf"/>
</dbReference>
<dbReference type="InterPro" id="IPR000719">
    <property type="entry name" value="Prot_kinase_dom"/>
</dbReference>
<dbReference type="InterPro" id="IPR008271">
    <property type="entry name" value="Ser/Thr_kinase_AS"/>
</dbReference>
<dbReference type="Pfam" id="PF00069">
    <property type="entry name" value="Pkinase"/>
    <property type="match status" value="1"/>
</dbReference>
<dbReference type="SMART" id="SM00220">
    <property type="entry name" value="S_TKc"/>
    <property type="match status" value="1"/>
</dbReference>
<dbReference type="SUPFAM" id="SSF56112">
    <property type="entry name" value="Protein kinase-like (PK-like)"/>
    <property type="match status" value="1"/>
</dbReference>
<dbReference type="PROSITE" id="PS50011">
    <property type="entry name" value="PROTEIN_KINASE_DOM"/>
    <property type="match status" value="1"/>
</dbReference>
<dbReference type="PROSITE" id="PS00108">
    <property type="entry name" value="PROTEIN_KINASE_ST"/>
    <property type="match status" value="1"/>
</dbReference>
<comment type="catalytic activity">
    <reaction>
        <text>L-seryl-[protein] + ATP = O-phospho-L-seryl-[protein] + ADP + H(+)</text>
        <dbReference type="Rhea" id="RHEA:17989"/>
        <dbReference type="Rhea" id="RHEA-COMP:9863"/>
        <dbReference type="Rhea" id="RHEA-COMP:11604"/>
        <dbReference type="ChEBI" id="CHEBI:15378"/>
        <dbReference type="ChEBI" id="CHEBI:29999"/>
        <dbReference type="ChEBI" id="CHEBI:30616"/>
        <dbReference type="ChEBI" id="CHEBI:83421"/>
        <dbReference type="ChEBI" id="CHEBI:456216"/>
        <dbReference type="EC" id="2.7.11.1"/>
    </reaction>
</comment>
<comment type="catalytic activity">
    <reaction>
        <text>L-threonyl-[protein] + ATP = O-phospho-L-threonyl-[protein] + ADP + H(+)</text>
        <dbReference type="Rhea" id="RHEA:46608"/>
        <dbReference type="Rhea" id="RHEA-COMP:11060"/>
        <dbReference type="Rhea" id="RHEA-COMP:11605"/>
        <dbReference type="ChEBI" id="CHEBI:15378"/>
        <dbReference type="ChEBI" id="CHEBI:30013"/>
        <dbReference type="ChEBI" id="CHEBI:30616"/>
        <dbReference type="ChEBI" id="CHEBI:61977"/>
        <dbReference type="ChEBI" id="CHEBI:456216"/>
        <dbReference type="EC" id="2.7.11.1"/>
    </reaction>
</comment>
<comment type="similarity">
    <text evidence="1">Belongs to the protein kinase superfamily. Ser/Thr protein kinase family.</text>
</comment>
<comment type="sequence caution" evidence="3">
    <conflict type="erroneous initiation">
        <sequence resource="EMBL-CDS" id="CAA34100"/>
    </conflict>
</comment>